<sequence length="250" mass="28226">MANIHIVIPARLKSTRLPNKMLADIAGKPMIQRVYEQVAKSKFDSIIIATDSQKIKDIAESFGAKVVLTRDDHQSGTDRIAEAVTKLGFADEDIVVNVQGDEPLIPIENIEQAAQLLIDKSEAVVSTLCEKITDVEDIYNPNNVKVVFDKNNYALYFSRASIPFERGFSEKEQINISEFFRHIGIYAYRVAFLKHYAELTVSPIEKYEALEQLRVLYNGYKIAIEQSAKSTPAGVDTLQDLEKVRRLFNV</sequence>
<dbReference type="EC" id="2.7.7.38" evidence="1"/>
<dbReference type="EMBL" id="CP000439">
    <property type="protein sequence ID" value="ABK89575.1"/>
    <property type="molecule type" value="Genomic_DNA"/>
</dbReference>
<dbReference type="RefSeq" id="WP_003033493.1">
    <property type="nucleotide sequence ID" value="NZ_CP009633.1"/>
</dbReference>
<dbReference type="SMR" id="A0Q5R0"/>
<dbReference type="GeneID" id="75263820"/>
<dbReference type="KEGG" id="ftn:FTN_0683"/>
<dbReference type="KEGG" id="ftx:AW25_1341"/>
<dbReference type="BioCyc" id="FTUL401614:G1G75-711-MONOMER"/>
<dbReference type="UniPathway" id="UPA00030"/>
<dbReference type="UniPathway" id="UPA00358">
    <property type="reaction ID" value="UER00476"/>
</dbReference>
<dbReference type="Proteomes" id="UP000000762">
    <property type="component" value="Chromosome"/>
</dbReference>
<dbReference type="GO" id="GO:0005829">
    <property type="term" value="C:cytosol"/>
    <property type="evidence" value="ECO:0007669"/>
    <property type="project" value="TreeGrafter"/>
</dbReference>
<dbReference type="GO" id="GO:0008690">
    <property type="term" value="F:3-deoxy-manno-octulosonate cytidylyltransferase activity"/>
    <property type="evidence" value="ECO:0007669"/>
    <property type="project" value="UniProtKB-UniRule"/>
</dbReference>
<dbReference type="GO" id="GO:0033468">
    <property type="term" value="P:CMP-keto-3-deoxy-D-manno-octulosonic acid biosynthetic process"/>
    <property type="evidence" value="ECO:0007669"/>
    <property type="project" value="UniProtKB-UniRule"/>
</dbReference>
<dbReference type="GO" id="GO:0009103">
    <property type="term" value="P:lipopolysaccharide biosynthetic process"/>
    <property type="evidence" value="ECO:0007669"/>
    <property type="project" value="UniProtKB-UniRule"/>
</dbReference>
<dbReference type="CDD" id="cd02517">
    <property type="entry name" value="CMP-KDO-Synthetase"/>
    <property type="match status" value="1"/>
</dbReference>
<dbReference type="FunFam" id="3.90.550.10:FF:000011">
    <property type="entry name" value="3-deoxy-manno-octulosonate cytidylyltransferase"/>
    <property type="match status" value="1"/>
</dbReference>
<dbReference type="Gene3D" id="3.90.550.10">
    <property type="entry name" value="Spore Coat Polysaccharide Biosynthesis Protein SpsA, Chain A"/>
    <property type="match status" value="1"/>
</dbReference>
<dbReference type="HAMAP" id="MF_00057">
    <property type="entry name" value="KdsB"/>
    <property type="match status" value="1"/>
</dbReference>
<dbReference type="InterPro" id="IPR003329">
    <property type="entry name" value="Cytidylyl_trans"/>
</dbReference>
<dbReference type="InterPro" id="IPR004528">
    <property type="entry name" value="KdsB"/>
</dbReference>
<dbReference type="InterPro" id="IPR029044">
    <property type="entry name" value="Nucleotide-diphossugar_trans"/>
</dbReference>
<dbReference type="NCBIfam" id="TIGR00466">
    <property type="entry name" value="kdsB"/>
    <property type="match status" value="1"/>
</dbReference>
<dbReference type="NCBIfam" id="NF003950">
    <property type="entry name" value="PRK05450.1-3"/>
    <property type="match status" value="1"/>
</dbReference>
<dbReference type="NCBIfam" id="NF003952">
    <property type="entry name" value="PRK05450.1-5"/>
    <property type="match status" value="1"/>
</dbReference>
<dbReference type="NCBIfam" id="NF009905">
    <property type="entry name" value="PRK13368.1"/>
    <property type="match status" value="1"/>
</dbReference>
<dbReference type="PANTHER" id="PTHR42866">
    <property type="entry name" value="3-DEOXY-MANNO-OCTULOSONATE CYTIDYLYLTRANSFERASE"/>
    <property type="match status" value="1"/>
</dbReference>
<dbReference type="PANTHER" id="PTHR42866:SF2">
    <property type="entry name" value="3-DEOXY-MANNO-OCTULOSONATE CYTIDYLYLTRANSFERASE, MITOCHONDRIAL"/>
    <property type="match status" value="1"/>
</dbReference>
<dbReference type="Pfam" id="PF02348">
    <property type="entry name" value="CTP_transf_3"/>
    <property type="match status" value="1"/>
</dbReference>
<dbReference type="SUPFAM" id="SSF53448">
    <property type="entry name" value="Nucleotide-diphospho-sugar transferases"/>
    <property type="match status" value="1"/>
</dbReference>
<protein>
    <recommendedName>
        <fullName evidence="1">3-deoxy-manno-octulosonate cytidylyltransferase</fullName>
        <ecNumber evidence="1">2.7.7.38</ecNumber>
    </recommendedName>
    <alternativeName>
        <fullName evidence="1">CMP-2-keto-3-deoxyoctulosonic acid synthase</fullName>
        <shortName evidence="1">CKS</shortName>
        <shortName evidence="1">CMP-KDO synthase</shortName>
    </alternativeName>
</protein>
<feature type="chain" id="PRO_0000370070" description="3-deoxy-manno-octulosonate cytidylyltransferase">
    <location>
        <begin position="1"/>
        <end position="250"/>
    </location>
</feature>
<keyword id="KW-0963">Cytoplasm</keyword>
<keyword id="KW-0448">Lipopolysaccharide biosynthesis</keyword>
<keyword id="KW-0548">Nucleotidyltransferase</keyword>
<keyword id="KW-0808">Transferase</keyword>
<accession>A0Q5R0</accession>
<reference key="1">
    <citation type="journal article" date="2007" name="Genome Biol.">
        <title>Comparison of Francisella tularensis genomes reveals evolutionary events associated with the emergence of human pathogenic strains.</title>
        <authorList>
            <person name="Rohmer L."/>
            <person name="Fong C."/>
            <person name="Abmayr S."/>
            <person name="Wasnick M."/>
            <person name="Larson Freeman T.J."/>
            <person name="Radey M."/>
            <person name="Guina T."/>
            <person name="Svensson K."/>
            <person name="Hayden H.S."/>
            <person name="Jacobs M."/>
            <person name="Gallagher L.A."/>
            <person name="Manoil C."/>
            <person name="Ernst R.K."/>
            <person name="Drees B."/>
            <person name="Buckley D."/>
            <person name="Haugen E."/>
            <person name="Bovee D."/>
            <person name="Zhou Y."/>
            <person name="Chang J."/>
            <person name="Levy R."/>
            <person name="Lim R."/>
            <person name="Gillett W."/>
            <person name="Guenthener D."/>
            <person name="Kang A."/>
            <person name="Shaffer S.A."/>
            <person name="Taylor G."/>
            <person name="Chen J."/>
            <person name="Gallis B."/>
            <person name="D'Argenio D.A."/>
            <person name="Forsman M."/>
            <person name="Olson M.V."/>
            <person name="Goodlett D.R."/>
            <person name="Kaul R."/>
            <person name="Miller S.I."/>
            <person name="Brittnacher M.J."/>
        </authorList>
    </citation>
    <scope>NUCLEOTIDE SEQUENCE [LARGE SCALE GENOMIC DNA]</scope>
    <source>
        <strain>U112</strain>
    </source>
</reference>
<proteinExistence type="inferred from homology"/>
<gene>
    <name evidence="1" type="primary">kdsB</name>
    <name type="ordered locus">FTN_0683</name>
</gene>
<organism>
    <name type="scientific">Francisella tularensis subsp. novicida (strain U112)</name>
    <dbReference type="NCBI Taxonomy" id="401614"/>
    <lineage>
        <taxon>Bacteria</taxon>
        <taxon>Pseudomonadati</taxon>
        <taxon>Pseudomonadota</taxon>
        <taxon>Gammaproteobacteria</taxon>
        <taxon>Thiotrichales</taxon>
        <taxon>Francisellaceae</taxon>
        <taxon>Francisella</taxon>
    </lineage>
</organism>
<comment type="function">
    <text evidence="1">Activates KDO (a required 8-carbon sugar) for incorporation into bacterial lipopolysaccharide in Gram-negative bacteria.</text>
</comment>
<comment type="catalytic activity">
    <reaction evidence="1">
        <text>3-deoxy-alpha-D-manno-oct-2-ulosonate + CTP = CMP-3-deoxy-beta-D-manno-octulosonate + diphosphate</text>
        <dbReference type="Rhea" id="RHEA:23448"/>
        <dbReference type="ChEBI" id="CHEBI:33019"/>
        <dbReference type="ChEBI" id="CHEBI:37563"/>
        <dbReference type="ChEBI" id="CHEBI:85986"/>
        <dbReference type="ChEBI" id="CHEBI:85987"/>
        <dbReference type="EC" id="2.7.7.38"/>
    </reaction>
</comment>
<comment type="pathway">
    <text evidence="1">Nucleotide-sugar biosynthesis; CMP-3-deoxy-D-manno-octulosonate biosynthesis; CMP-3-deoxy-D-manno-octulosonate from 3-deoxy-D-manno-octulosonate and CTP: step 1/1.</text>
</comment>
<comment type="pathway">
    <text evidence="1">Bacterial outer membrane biogenesis; lipopolysaccharide biosynthesis.</text>
</comment>
<comment type="subcellular location">
    <subcellularLocation>
        <location evidence="1">Cytoplasm</location>
    </subcellularLocation>
</comment>
<comment type="similarity">
    <text evidence="1">Belongs to the KdsB family.</text>
</comment>
<name>KDSB_FRATN</name>
<evidence type="ECO:0000255" key="1">
    <source>
        <dbReference type="HAMAP-Rule" id="MF_00057"/>
    </source>
</evidence>